<feature type="chain" id="PRO_0000424366" description="Septation protein 7">
    <location>
        <begin position="1"/>
        <end position="670"/>
    </location>
</feature>
<feature type="domain" description="Septin-type G" evidence="3">
    <location>
        <begin position="33"/>
        <end position="357"/>
    </location>
</feature>
<feature type="region of interest" description="G1 motif" evidence="3">
    <location>
        <begin position="43"/>
        <end position="50"/>
    </location>
</feature>
<feature type="region of interest" description="G3 motif" evidence="3">
    <location>
        <begin position="134"/>
        <end position="137"/>
    </location>
</feature>
<feature type="region of interest" description="G4 motif" evidence="3">
    <location>
        <begin position="216"/>
        <end position="219"/>
    </location>
</feature>
<feature type="region of interest" description="Disordered" evidence="4">
    <location>
        <begin position="383"/>
        <end position="513"/>
    </location>
</feature>
<feature type="region of interest" description="Disordered" evidence="4">
    <location>
        <begin position="574"/>
        <end position="670"/>
    </location>
</feature>
<feature type="coiled-coil region" evidence="2">
    <location>
        <begin position="472"/>
        <end position="606"/>
    </location>
</feature>
<feature type="compositionally biased region" description="Low complexity" evidence="4">
    <location>
        <begin position="395"/>
        <end position="404"/>
    </location>
</feature>
<feature type="compositionally biased region" description="Polar residues" evidence="4">
    <location>
        <begin position="405"/>
        <end position="421"/>
    </location>
</feature>
<feature type="compositionally biased region" description="Low complexity" evidence="4">
    <location>
        <begin position="433"/>
        <end position="446"/>
    </location>
</feature>
<feature type="compositionally biased region" description="Low complexity" evidence="4">
    <location>
        <begin position="463"/>
        <end position="473"/>
    </location>
</feature>
<feature type="compositionally biased region" description="Basic and acidic residues" evidence="4">
    <location>
        <begin position="476"/>
        <end position="487"/>
    </location>
</feature>
<feature type="compositionally biased region" description="Low complexity" evidence="4">
    <location>
        <begin position="489"/>
        <end position="500"/>
    </location>
</feature>
<feature type="compositionally biased region" description="Basic and acidic residues" evidence="4">
    <location>
        <begin position="631"/>
        <end position="645"/>
    </location>
</feature>
<feature type="binding site" evidence="1">
    <location>
        <begin position="43"/>
        <end position="50"/>
    </location>
    <ligand>
        <name>GTP</name>
        <dbReference type="ChEBI" id="CHEBI:37565"/>
    </ligand>
</feature>
<feature type="binding site" evidence="1">
    <location>
        <position position="137"/>
    </location>
    <ligand>
        <name>GTP</name>
        <dbReference type="ChEBI" id="CHEBI:37565"/>
    </ligand>
</feature>
<feature type="binding site" evidence="1">
    <location>
        <begin position="217"/>
        <end position="225"/>
    </location>
    <ligand>
        <name>GTP</name>
        <dbReference type="ChEBI" id="CHEBI:37565"/>
    </ligand>
</feature>
<feature type="binding site" evidence="1">
    <location>
        <position position="306"/>
    </location>
    <ligand>
        <name>GTP</name>
        <dbReference type="ChEBI" id="CHEBI:37565"/>
    </ligand>
</feature>
<proteinExistence type="evidence at protein level"/>
<sequence length="670" mass="75795">MSRFDYRNTSKNTSVVDPDHSSPIINYRKDAKKGIKFTFMVVGESGTGKTTFINSLLNKKVLNHRYEKLSPTVGDTKTLMFTSAKSVALPNTSILTKNEFNPRTINEEPGIALTETHIEIIDDDNQKLLLNIIDTPGFGENLNNELCFIEIENYLKQQFDLVLAEETRIKRNPRFVDTRVHVMLYFITPTGHGLREIDIQCMKRLSKYVNIIPVIGKADSFTLNELQHFKQQIRIDIQKFNVPTFQFDNSLNDYDEDEDYDLIQECKFLTNLQPFAVVTSEDVFEVRESTTSTKGNNDKPKIIRARKYPWGLVDINDTRYSDFPILKSVLLGSHLQDLKDLTHDFLYETYRTERLTKVTGNGQAFDDEENEDAEFHDTVEHQLNDSNRGVGGDDNNNNNNNNNNASTIPSMSNLAQLTTSTNEHDASHIDNNSITSTSSSIKKSTSMLIDDHPSSSPKLKNISSFTSSTSTVSLEGGEKEGGHHDRGANSTSTNNNNNNNAFKRLSIGPQRNQLRQISETVPYVLRHERILERQQKLEEMEQASARELANRAALLEKKAAQLKAKEKALRQLELNRQKQEESATSSLHRKDSDISGSVQSGGVDDGKSESTNNNNNNRNGYGYGHGHGHGQSHEYDNSEYHHDDSTPNYETSRLQKDETLTDLHSIVSNH</sequence>
<accession>Q59VX8</accession>
<accession>A0A1D8PCP5</accession>
<comment type="function">
    <text evidence="7">Septins are GTPases involved in cytokinesis that assemble early in the cell cycle as a patch at the incipient bud site and form a ring before bud emergence, which transforms into an hour-glass shaped collar of cortical filaments that spans both sides of the mother-bud neck. This collar persists until just before cytokinesis, when it splits into two rings that occupy opposite sides of the neck. The septins at the bud neck serve as a structural scaffold that recruits different components involved in diverse processes at specific stages during the cell cycle. Many proteins bind asymmetrically to the septin collar. The septin assembly is regulated by protein kinase GIN4. Septins are also involved in cell morphogenesis, chlamydospores morphogenesis, bud site selection, chitin deposition, cell cycle regulation, cell compartmentalization and spore wall formation. SEP7 is required to convert hyphal septin rings into the hyphal-specific state and is necessary for CDC10 turnover during hyphal growth.</text>
</comment>
<comment type="subunit">
    <text evidence="6 8">Component of the septin complex which consists of CDC3, CDC10, CDC11, CDC12 and probably SEP7. The purified septin complex appeared to have a stoichiometry of 2 CDC3, 1 to 2 CDC10, 1 CDC11, 2 CDC12, and 1 or none SEP7 subunit. Induction of hyphal growth brings about important modifications in septin ring dynamics, because the rings were found in a different state from those of yeast cells. This hyphal-specific state contains a core of stable septins (SEP7, CDC3, and CDC12), and it shows a high CDC10 turnover between the ring and the cytoplasm. Interacts with GIN4.</text>
</comment>
<comment type="subcellular location">
    <subcellularLocation>
        <location evidence="7 9">Bud neck</location>
    </subcellularLocation>
    <text>Present at the bud neck during cell division.</text>
</comment>
<comment type="PTM">
    <text evidence="7 8">Phosphorylated by GIN4 which stabilizes the GIN4-SEP7 interaction.</text>
</comment>
<comment type="disruption phenotype">
    <text evidence="5">Leads to a minor reduction in agar invasion ability.</text>
</comment>
<comment type="similarity">
    <text evidence="3">Belongs to the TRAFAC class TrmE-Era-EngA-EngB-Septin-like GTPase superfamily. Septin GTPase family.</text>
</comment>
<dbReference type="EMBL" id="CP017623">
    <property type="protein sequence ID" value="AOW25908.1"/>
    <property type="molecule type" value="Genomic_DNA"/>
</dbReference>
<dbReference type="RefSeq" id="XP_713774.1">
    <property type="nucleotide sequence ID" value="XM_708681.2"/>
</dbReference>
<dbReference type="SMR" id="Q59VX8"/>
<dbReference type="BioGRID" id="1227690">
    <property type="interactions" value="7"/>
</dbReference>
<dbReference type="FunCoup" id="Q59VX8">
    <property type="interactions" value="197"/>
</dbReference>
<dbReference type="STRING" id="237561.Q59VX8"/>
<dbReference type="EnsemblFungi" id="C1_02230W_A-T">
    <property type="protein sequence ID" value="C1_02230W_A-T-p1"/>
    <property type="gene ID" value="C1_02230W_A"/>
</dbReference>
<dbReference type="GeneID" id="3644596"/>
<dbReference type="KEGG" id="cal:CAALFM_C102230WA"/>
<dbReference type="CGD" id="CAL0000186883">
    <property type="gene designation" value="SEP7"/>
</dbReference>
<dbReference type="VEuPathDB" id="FungiDB:C1_02230W_A"/>
<dbReference type="eggNOG" id="KOG2655">
    <property type="taxonomic scope" value="Eukaryota"/>
</dbReference>
<dbReference type="HOGENOM" id="CLU_017718_7_4_1"/>
<dbReference type="InParanoid" id="Q59VX8"/>
<dbReference type="OrthoDB" id="416553at2759"/>
<dbReference type="PRO" id="PR:Q59VX8"/>
<dbReference type="Proteomes" id="UP000000559">
    <property type="component" value="Chromosome 1"/>
</dbReference>
<dbReference type="GO" id="GO:0032153">
    <property type="term" value="C:cell division site"/>
    <property type="evidence" value="ECO:0000318"/>
    <property type="project" value="GO_Central"/>
</dbReference>
<dbReference type="GO" id="GO:0030428">
    <property type="term" value="C:cell septum"/>
    <property type="evidence" value="ECO:0000314"/>
    <property type="project" value="CGD"/>
</dbReference>
<dbReference type="GO" id="GO:0005935">
    <property type="term" value="C:cellular bud neck"/>
    <property type="evidence" value="ECO:0000314"/>
    <property type="project" value="CGD"/>
</dbReference>
<dbReference type="GO" id="GO:0005829">
    <property type="term" value="C:cytosol"/>
    <property type="evidence" value="ECO:0000318"/>
    <property type="project" value="GO_Central"/>
</dbReference>
<dbReference type="GO" id="GO:1990317">
    <property type="term" value="C:Gin4 complex"/>
    <property type="evidence" value="ECO:0007669"/>
    <property type="project" value="EnsemblFungi"/>
</dbReference>
<dbReference type="GO" id="GO:0015630">
    <property type="term" value="C:microtubule cytoskeleton"/>
    <property type="evidence" value="ECO:0000318"/>
    <property type="project" value="GO_Central"/>
</dbReference>
<dbReference type="GO" id="GO:0031105">
    <property type="term" value="C:septin complex"/>
    <property type="evidence" value="ECO:0000318"/>
    <property type="project" value="GO_Central"/>
</dbReference>
<dbReference type="GO" id="GO:0005940">
    <property type="term" value="C:septin ring"/>
    <property type="evidence" value="ECO:0000314"/>
    <property type="project" value="CGD"/>
</dbReference>
<dbReference type="GO" id="GO:0005525">
    <property type="term" value="F:GTP binding"/>
    <property type="evidence" value="ECO:0007669"/>
    <property type="project" value="UniProtKB-KW"/>
</dbReference>
<dbReference type="GO" id="GO:0003924">
    <property type="term" value="F:GTPase activity"/>
    <property type="evidence" value="ECO:0000318"/>
    <property type="project" value="GO_Central"/>
</dbReference>
<dbReference type="GO" id="GO:0060090">
    <property type="term" value="F:molecular adaptor activity"/>
    <property type="evidence" value="ECO:0000318"/>
    <property type="project" value="GO_Central"/>
</dbReference>
<dbReference type="GO" id="GO:0005200">
    <property type="term" value="F:structural constituent of cytoskeleton"/>
    <property type="evidence" value="ECO:0007669"/>
    <property type="project" value="EnsemblFungi"/>
</dbReference>
<dbReference type="GO" id="GO:0000915">
    <property type="term" value="P:actomyosin contractile ring assembly"/>
    <property type="evidence" value="ECO:0000318"/>
    <property type="project" value="GO_Central"/>
</dbReference>
<dbReference type="GO" id="GO:0032186">
    <property type="term" value="P:cellular bud neck septin ring organization"/>
    <property type="evidence" value="ECO:0000318"/>
    <property type="project" value="GO_Central"/>
</dbReference>
<dbReference type="GO" id="GO:0061640">
    <property type="term" value="P:cytoskeleton-dependent cytokinesis"/>
    <property type="evidence" value="ECO:0000318"/>
    <property type="project" value="GO_Central"/>
</dbReference>
<dbReference type="GO" id="GO:0000917">
    <property type="term" value="P:division septum assembly"/>
    <property type="evidence" value="ECO:0000318"/>
    <property type="project" value="GO_Central"/>
</dbReference>
<dbReference type="GO" id="GO:0061163">
    <property type="term" value="P:endoplasmic reticulum polarization"/>
    <property type="evidence" value="ECO:0007669"/>
    <property type="project" value="EnsemblFungi"/>
</dbReference>
<dbReference type="GO" id="GO:0010458">
    <property type="term" value="P:exit from mitosis"/>
    <property type="evidence" value="ECO:0007669"/>
    <property type="project" value="EnsemblFungi"/>
</dbReference>
<dbReference type="GO" id="GO:0000082">
    <property type="term" value="P:G1/S transition of mitotic cell cycle"/>
    <property type="evidence" value="ECO:0007669"/>
    <property type="project" value="EnsemblFungi"/>
</dbReference>
<dbReference type="GO" id="GO:0030448">
    <property type="term" value="P:hyphal growth"/>
    <property type="evidence" value="ECO:0000315"/>
    <property type="project" value="CGD"/>
</dbReference>
<dbReference type="GO" id="GO:1903475">
    <property type="term" value="P:mitotic actomyosin contractile ring assembly"/>
    <property type="evidence" value="ECO:0007669"/>
    <property type="project" value="EnsemblFungi"/>
</dbReference>
<dbReference type="GO" id="GO:0000280">
    <property type="term" value="P:nuclear division"/>
    <property type="evidence" value="ECO:0000316"/>
    <property type="project" value="CGD"/>
</dbReference>
<dbReference type="GO" id="GO:0097271">
    <property type="term" value="P:protein localization to bud neck"/>
    <property type="evidence" value="ECO:0000318"/>
    <property type="project" value="GO_Central"/>
</dbReference>
<dbReference type="GO" id="GO:0000921">
    <property type="term" value="P:septin ring assembly"/>
    <property type="evidence" value="ECO:0007669"/>
    <property type="project" value="EnsemblFungi"/>
</dbReference>
<dbReference type="CDD" id="cd01850">
    <property type="entry name" value="CDC_Septin"/>
    <property type="match status" value="1"/>
</dbReference>
<dbReference type="Gene3D" id="3.40.50.300">
    <property type="entry name" value="P-loop containing nucleotide triphosphate hydrolases"/>
    <property type="match status" value="1"/>
</dbReference>
<dbReference type="InterPro" id="IPR030379">
    <property type="entry name" value="G_SEPTIN_dom"/>
</dbReference>
<dbReference type="InterPro" id="IPR027417">
    <property type="entry name" value="P-loop_NTPase"/>
</dbReference>
<dbReference type="InterPro" id="IPR016491">
    <property type="entry name" value="Septin"/>
</dbReference>
<dbReference type="InterPro" id="IPR025662">
    <property type="entry name" value="Sigma_54_int_dom_ATP-bd_1"/>
</dbReference>
<dbReference type="PANTHER" id="PTHR18884">
    <property type="entry name" value="SEPTIN"/>
    <property type="match status" value="1"/>
</dbReference>
<dbReference type="Pfam" id="PF00735">
    <property type="entry name" value="Septin"/>
    <property type="match status" value="1"/>
</dbReference>
<dbReference type="SUPFAM" id="SSF52540">
    <property type="entry name" value="P-loop containing nucleoside triphosphate hydrolases"/>
    <property type="match status" value="1"/>
</dbReference>
<dbReference type="PROSITE" id="PS51719">
    <property type="entry name" value="G_SEPTIN"/>
    <property type="match status" value="1"/>
</dbReference>
<dbReference type="PROSITE" id="PS00675">
    <property type="entry name" value="SIGMA54_INTERACT_1"/>
    <property type="match status" value="1"/>
</dbReference>
<organism>
    <name type="scientific">Candida albicans (strain SC5314 / ATCC MYA-2876)</name>
    <name type="common">Yeast</name>
    <dbReference type="NCBI Taxonomy" id="237561"/>
    <lineage>
        <taxon>Eukaryota</taxon>
        <taxon>Fungi</taxon>
        <taxon>Dikarya</taxon>
        <taxon>Ascomycota</taxon>
        <taxon>Saccharomycotina</taxon>
        <taxon>Pichiomycetes</taxon>
        <taxon>Debaryomycetaceae</taxon>
        <taxon>Candida/Lodderomyces clade</taxon>
        <taxon>Candida</taxon>
    </lineage>
</organism>
<keyword id="KW-0131">Cell cycle</keyword>
<keyword id="KW-0132">Cell division</keyword>
<keyword id="KW-0175">Coiled coil</keyword>
<keyword id="KW-0342">GTP-binding</keyword>
<keyword id="KW-0378">Hydrolase</keyword>
<keyword id="KW-0547">Nucleotide-binding</keyword>
<keyword id="KW-0597">Phosphoprotein</keyword>
<keyword id="KW-1185">Reference proteome</keyword>
<gene>
    <name type="primary">SEP7</name>
    <name type="synonym">SHS1</name>
    <name type="ordered locus">CAALFM_C102230WA</name>
    <name type="ORF">CaO19.11164</name>
    <name type="ORF">CaO19.3680</name>
</gene>
<name>SHS1_CANAL</name>
<evidence type="ECO:0000250" key="1"/>
<evidence type="ECO:0000255" key="2"/>
<evidence type="ECO:0000255" key="3">
    <source>
        <dbReference type="PROSITE-ProRule" id="PRU01056"/>
    </source>
</evidence>
<evidence type="ECO:0000256" key="4">
    <source>
        <dbReference type="SAM" id="MobiDB-lite"/>
    </source>
</evidence>
<evidence type="ECO:0000269" key="5">
    <source>
    </source>
</evidence>
<evidence type="ECO:0000269" key="6">
    <source>
    </source>
</evidence>
<evidence type="ECO:0000269" key="7">
    <source>
    </source>
</evidence>
<evidence type="ECO:0000269" key="8">
    <source>
    </source>
</evidence>
<evidence type="ECO:0000269" key="9">
    <source>
    </source>
</evidence>
<reference key="1">
    <citation type="journal article" date="2004" name="Proc. Natl. Acad. Sci. U.S.A.">
        <title>The diploid genome sequence of Candida albicans.</title>
        <authorList>
            <person name="Jones T."/>
            <person name="Federspiel N.A."/>
            <person name="Chibana H."/>
            <person name="Dungan J."/>
            <person name="Kalman S."/>
            <person name="Magee B.B."/>
            <person name="Newport G."/>
            <person name="Thorstenson Y.R."/>
            <person name="Agabian N."/>
            <person name="Magee P.T."/>
            <person name="Davis R.W."/>
            <person name="Scherer S."/>
        </authorList>
    </citation>
    <scope>NUCLEOTIDE SEQUENCE [LARGE SCALE GENOMIC DNA]</scope>
    <source>
        <strain>SC5314 / ATCC MYA-2876</strain>
    </source>
</reference>
<reference key="2">
    <citation type="journal article" date="2007" name="Genome Biol.">
        <title>Assembly of the Candida albicans genome into sixteen supercontigs aligned on the eight chromosomes.</title>
        <authorList>
            <person name="van het Hoog M."/>
            <person name="Rast T.J."/>
            <person name="Martchenko M."/>
            <person name="Grindle S."/>
            <person name="Dignard D."/>
            <person name="Hogues H."/>
            <person name="Cuomo C."/>
            <person name="Berriman M."/>
            <person name="Scherer S."/>
            <person name="Magee B.B."/>
            <person name="Whiteway M."/>
            <person name="Chibana H."/>
            <person name="Nantel A."/>
            <person name="Magee P.T."/>
        </authorList>
    </citation>
    <scope>GENOME REANNOTATION</scope>
    <source>
        <strain>SC5314 / ATCC MYA-2876</strain>
    </source>
</reference>
<reference key="3">
    <citation type="journal article" date="2013" name="Genome Biol.">
        <title>Assembly of a phased diploid Candida albicans genome facilitates allele-specific measurements and provides a simple model for repeat and indel structure.</title>
        <authorList>
            <person name="Muzzey D."/>
            <person name="Schwartz K."/>
            <person name="Weissman J.S."/>
            <person name="Sherlock G."/>
        </authorList>
    </citation>
    <scope>NUCLEOTIDE SEQUENCE [LARGE SCALE GENOMIC DNA]</scope>
    <scope>GENOME REANNOTATION</scope>
    <source>
        <strain>SC5314 / ATCC MYA-2876</strain>
    </source>
</reference>
<reference key="4">
    <citation type="journal article" date="2002" name="Mol. Biol. Cell">
        <title>Septin function in Candida albicans morphogenesis.</title>
        <authorList>
            <person name="Warenda A.J."/>
            <person name="Konopka J.B."/>
        </authorList>
    </citation>
    <scope>IDENTIFICATION</scope>
</reference>
<reference key="5">
    <citation type="journal article" date="2003" name="Infect. Immun.">
        <title>Candida albicans septin mutants are defective for invasive growth and virulence.</title>
        <authorList>
            <person name="Warenda A.J."/>
            <person name="Kauffman S."/>
            <person name="Sherrill T.P."/>
            <person name="Becker J.M."/>
            <person name="Konopka J.B."/>
        </authorList>
    </citation>
    <scope>DISRUPTION PHENOTYPE</scope>
</reference>
<reference key="6">
    <citation type="journal article" date="2004" name="Yeast">
        <title>Tandem affinity purification of the Candida albicans septin protein complex.</title>
        <authorList>
            <person name="Kaneko A."/>
            <person name="Umeyama T."/>
            <person name="Hanaoka N."/>
            <person name="Monk B.C."/>
            <person name="Uehara Y."/>
            <person name="Niimi M."/>
        </authorList>
    </citation>
    <scope>IDENTIFICATION BY MASS SPECTROMETRY</scope>
    <scope>IDENTIFICATION IN THE SEPTIN COMPLEX</scope>
</reference>
<reference key="7">
    <citation type="journal article" date="2008" name="Mol. Biol. Cell">
        <title>Sep7 is essential to modify septin ring dynamics and inhibit cell separation during Candida albicans hyphal growth.</title>
        <authorList>
            <person name="Gonzalez-Novo A."/>
            <person name="Correa-Bordes J."/>
            <person name="Labrador L."/>
            <person name="Sanchez M."/>
            <person name="Vazquez de Aldana C.R."/>
            <person name="Jimenez J."/>
        </authorList>
    </citation>
    <scope>SUBCELLULAR LOCATION</scope>
    <scope>FUNCTION</scope>
    <scope>PHOSPHORYLATION</scope>
</reference>
<reference key="8">
    <citation type="journal article" date="2012" name="Antimicrob. Agents Chemother.">
        <title>Rapid redistribution of phosphatidylinositol-(4,5)-bisphosphate and septins during the Candida albicans response to caspofungin.</title>
        <authorList>
            <person name="Badrane H."/>
            <person name="Nguyen M.H."/>
            <person name="Blankenship J.R."/>
            <person name="Cheng S."/>
            <person name="Hao B."/>
            <person name="Mitchell A.P."/>
            <person name="Clancy C.J."/>
        </authorList>
    </citation>
    <scope>SUBCELLULAR LOCATION</scope>
</reference>
<reference key="9">
    <citation type="journal article" date="2012" name="J. Cell Sci.">
        <title>CDK regulates septin organization through cell-cycle-dependent phosphorylation of the Nim1-related kinase Gin4.</title>
        <authorList>
            <person name="Li C.R."/>
            <person name="Yong J.Y."/>
            <person name="Wang Y.M."/>
            <person name="Wang Y."/>
        </authorList>
    </citation>
    <scope>INTERACTION WITH GIN4</scope>
    <scope>PHOSPHORYLATION</scope>
</reference>
<protein>
    <recommendedName>
        <fullName>Septation protein 7</fullName>
    </recommendedName>
    <alternativeName>
        <fullName>Seventh homolog of septin 1</fullName>
    </alternativeName>
</protein>